<sequence length="614" mass="69084">MSRFARLLLMVVALFFTNAWAKTVKETLRITWKEGAPNGQARELIYTNGQFPSPTLVWDEDDDVEITVYNEMAKNVTVHWHGLDQKDTPWSDGTPGLSQRPIQPGNKFVYKFKASPPGNHWYHSHEKMSLVDGLYGAIHIRPKGDRTGLWSQISQDKDDIKAMENAAHDPEYLVVSDWSQYTSEEYWKISTDSGLLVFCLDSILVNGKGEVYCPGQKFLQAELAPGLVEDAFPPGTEVSDKGCFPADLDQVQGGPWNITKRPDLIPPRVQEGCVASSHENATIVVDPSRNNGWVSMHIVAAATIAQITFSVDSHEFWLYEIDGNYVNPRKFVSAVMSAGETFSVMIKLDQKPGRYTMRIPNSGASQVLGGFAEMVYKGCESEEKTGKAYLSYGGNPTSPDVEKNSFFPWQLDTDHMSPWPPNKPRPGNADEEHLLVLGRVGAPYNYTMNTKYLYPVDFQNDDPLLFYPNATRDTENDGLVLRTKNGSWVDLILQVSTLPGDTSSFEHFMHKHGSKTWRIGFGTGVWNYTSVEEAIKERPKDFNLETPGLRDTWITAFSIGGEAYWSVFRYFVDNPGPWLFHCHIELHLMGGMGIAILDGVDAWPEHIPEEYQLC</sequence>
<comment type="function">
    <text evidence="6 9">Laccase; part of the Pks1 gene cluster that mediates the biosynthesis of an anthraquinone derivative pigment that contributes to conidial pigmentation that provides protection from UV radiation, heat and cold stress (PubMed:29958281). The polyketide synthase Pks1 produces 1-acetyl-2,4,6,8-tetrahydroxy-9,10-anthraquinone though condensation of acetyl-CoA with malonyl-CoA (Probable). The dehydratase EthD and the laccase Mlac1 further convert the anthraquinone derivative into the final conidial pigment (Probable).</text>
</comment>
<comment type="cofactor">
    <cofactor evidence="3">
        <name>Cu cation</name>
        <dbReference type="ChEBI" id="CHEBI:23378"/>
    </cofactor>
    <text evidence="3">Binds 4 Cu cations per monomer.</text>
</comment>
<comment type="pathway">
    <text evidence="9">Pigment biosynthesis.</text>
</comment>
<comment type="subcellular location">
    <subcellularLocation>
        <location evidence="2">Cell surface</location>
    </subcellularLocation>
</comment>
<comment type="similarity">
    <text evidence="8">Belongs to the multicopper oxidase family.</text>
</comment>
<evidence type="ECO:0000250" key="1">
    <source>
        <dbReference type="UniProtKB" id="E9F648"/>
    </source>
</evidence>
<evidence type="ECO:0000250" key="2">
    <source>
        <dbReference type="UniProtKB" id="E9RBR0"/>
    </source>
</evidence>
<evidence type="ECO:0000250" key="3">
    <source>
        <dbReference type="UniProtKB" id="Q70KY3"/>
    </source>
</evidence>
<evidence type="ECO:0000255" key="4"/>
<evidence type="ECO:0000255" key="5">
    <source>
        <dbReference type="PROSITE-ProRule" id="PRU00498"/>
    </source>
</evidence>
<evidence type="ECO:0000269" key="6">
    <source>
    </source>
</evidence>
<evidence type="ECO:0000303" key="7">
    <source>
    </source>
</evidence>
<evidence type="ECO:0000305" key="8"/>
<evidence type="ECO:0000305" key="9">
    <source>
    </source>
</evidence>
<protein>
    <recommendedName>
        <fullName evidence="1">Laccase 1</fullName>
        <ecNumber evidence="9">1.10.3.-</ecNumber>
    </recommendedName>
    <alternativeName>
        <fullName evidence="1">Conidial pigment biosynthesis oxidase Mlac1</fullName>
    </alternativeName>
</protein>
<accession>A0A0B4HQH6</accession>
<dbReference type="EC" id="1.10.3.-" evidence="9"/>
<dbReference type="EMBL" id="AZNE01000110">
    <property type="protein sequence ID" value="KID94572.1"/>
    <property type="molecule type" value="Genomic_DNA"/>
</dbReference>
<dbReference type="RefSeq" id="XP_014573566.1">
    <property type="nucleotide sequence ID" value="XM_014718080.1"/>
</dbReference>
<dbReference type="SMR" id="A0A0B4HQH6"/>
<dbReference type="GlyCosmos" id="A0A0B4HQH6">
    <property type="glycosylation" value="7 sites, No reported glycans"/>
</dbReference>
<dbReference type="HOGENOM" id="CLU_006504_5_0_1"/>
<dbReference type="OrthoDB" id="2121828at2759"/>
<dbReference type="GO" id="GO:0009986">
    <property type="term" value="C:cell surface"/>
    <property type="evidence" value="ECO:0007669"/>
    <property type="project" value="UniProtKB-SubCell"/>
</dbReference>
<dbReference type="GO" id="GO:0005507">
    <property type="term" value="F:copper ion binding"/>
    <property type="evidence" value="ECO:0007669"/>
    <property type="project" value="InterPro"/>
</dbReference>
<dbReference type="GO" id="GO:0016491">
    <property type="term" value="F:oxidoreductase activity"/>
    <property type="evidence" value="ECO:0007669"/>
    <property type="project" value="UniProtKB-KW"/>
</dbReference>
<dbReference type="CDD" id="cd13850">
    <property type="entry name" value="CuRO_1_Abr2_like"/>
    <property type="match status" value="1"/>
</dbReference>
<dbReference type="CDD" id="cd13876">
    <property type="entry name" value="CuRO_2_Abr2_like"/>
    <property type="match status" value="1"/>
</dbReference>
<dbReference type="CDD" id="cd13898">
    <property type="entry name" value="CuRO_3_Abr2_like"/>
    <property type="match status" value="1"/>
</dbReference>
<dbReference type="FunFam" id="2.60.40.420:FF:000036">
    <property type="entry name" value="L-ascorbate oxidase"/>
    <property type="match status" value="1"/>
</dbReference>
<dbReference type="Gene3D" id="2.60.40.420">
    <property type="entry name" value="Cupredoxins - blue copper proteins"/>
    <property type="match status" value="3"/>
</dbReference>
<dbReference type="InterPro" id="IPR011707">
    <property type="entry name" value="Cu-oxidase-like_N"/>
</dbReference>
<dbReference type="InterPro" id="IPR001117">
    <property type="entry name" value="Cu-oxidase_2nd"/>
</dbReference>
<dbReference type="InterPro" id="IPR011706">
    <property type="entry name" value="Cu-oxidase_C"/>
</dbReference>
<dbReference type="InterPro" id="IPR045087">
    <property type="entry name" value="Cu-oxidase_fam"/>
</dbReference>
<dbReference type="InterPro" id="IPR033138">
    <property type="entry name" value="Cu_oxidase_CS"/>
</dbReference>
<dbReference type="InterPro" id="IPR002355">
    <property type="entry name" value="Cu_oxidase_Cu_BS"/>
</dbReference>
<dbReference type="InterPro" id="IPR008972">
    <property type="entry name" value="Cupredoxin"/>
</dbReference>
<dbReference type="PANTHER" id="PTHR11709:SF488">
    <property type="entry name" value="LACCASE-RELATED"/>
    <property type="match status" value="1"/>
</dbReference>
<dbReference type="PANTHER" id="PTHR11709">
    <property type="entry name" value="MULTI-COPPER OXIDASE"/>
    <property type="match status" value="1"/>
</dbReference>
<dbReference type="Pfam" id="PF00394">
    <property type="entry name" value="Cu-oxidase"/>
    <property type="match status" value="1"/>
</dbReference>
<dbReference type="Pfam" id="PF07731">
    <property type="entry name" value="Cu-oxidase_2"/>
    <property type="match status" value="1"/>
</dbReference>
<dbReference type="Pfam" id="PF07732">
    <property type="entry name" value="Cu-oxidase_3"/>
    <property type="match status" value="1"/>
</dbReference>
<dbReference type="SUPFAM" id="SSF49503">
    <property type="entry name" value="Cupredoxins"/>
    <property type="match status" value="3"/>
</dbReference>
<dbReference type="PROSITE" id="PS00079">
    <property type="entry name" value="MULTICOPPER_OXIDASE1"/>
    <property type="match status" value="1"/>
</dbReference>
<dbReference type="PROSITE" id="PS00080">
    <property type="entry name" value="MULTICOPPER_OXIDASE2"/>
    <property type="match status" value="1"/>
</dbReference>
<feature type="signal peptide" evidence="4">
    <location>
        <begin position="1"/>
        <end position="21"/>
    </location>
</feature>
<feature type="chain" id="PRO_5002105906" description="Laccase 1">
    <location>
        <begin position="22"/>
        <end position="614"/>
    </location>
</feature>
<feature type="domain" description="Plastocyanin-like 1" evidence="4">
    <location>
        <begin position="30"/>
        <end position="143"/>
    </location>
</feature>
<feature type="domain" description="Plastocyanin-like 2" evidence="4">
    <location>
        <begin position="172"/>
        <end position="360"/>
    </location>
</feature>
<feature type="domain" description="Plastocyanin-like 3" evidence="4">
    <location>
        <begin position="469"/>
        <end position="599"/>
    </location>
</feature>
<feature type="binding site" evidence="3">
    <location>
        <position position="79"/>
    </location>
    <ligand>
        <name>Cu cation</name>
        <dbReference type="ChEBI" id="CHEBI:23378"/>
        <label>1</label>
    </ligand>
</feature>
<feature type="binding site" evidence="3">
    <location>
        <position position="81"/>
    </location>
    <ligand>
        <name>Cu cation</name>
        <dbReference type="ChEBI" id="CHEBI:23378"/>
        <label>2</label>
    </ligand>
</feature>
<feature type="binding site" evidence="3">
    <location>
        <position position="123"/>
    </location>
    <ligand>
        <name>Cu cation</name>
        <dbReference type="ChEBI" id="CHEBI:23378"/>
        <label>2</label>
    </ligand>
</feature>
<feature type="binding site" evidence="3">
    <location>
        <position position="125"/>
    </location>
    <ligand>
        <name>Cu cation</name>
        <dbReference type="ChEBI" id="CHEBI:23378"/>
        <label>3</label>
    </ligand>
</feature>
<feature type="binding site" evidence="3">
    <location>
        <position position="507"/>
    </location>
    <ligand>
        <name>Cu cation</name>
        <dbReference type="ChEBI" id="CHEBI:23378"/>
        <label>4</label>
    </ligand>
</feature>
<feature type="binding site" evidence="3">
    <location>
        <position position="510"/>
    </location>
    <ligand>
        <name>Cu cation</name>
        <dbReference type="ChEBI" id="CHEBI:23378"/>
        <label>1</label>
    </ligand>
</feature>
<feature type="binding site" evidence="3">
    <location>
        <position position="510"/>
    </location>
    <ligand>
        <name>Cu cation</name>
        <dbReference type="ChEBI" id="CHEBI:23378"/>
        <label>4</label>
    </ligand>
</feature>
<feature type="binding site" evidence="3">
    <location>
        <position position="512"/>
    </location>
    <ligand>
        <name>Cu cation</name>
        <dbReference type="ChEBI" id="CHEBI:23378"/>
        <label>3</label>
    </ligand>
</feature>
<feature type="binding site" evidence="3">
    <location>
        <position position="581"/>
    </location>
    <ligand>
        <name>Cu cation</name>
        <dbReference type="ChEBI" id="CHEBI:23378"/>
        <label>3</label>
    </ligand>
</feature>
<feature type="binding site" evidence="3">
    <location>
        <position position="582"/>
    </location>
    <ligand>
        <name>Cu cation</name>
        <dbReference type="ChEBI" id="CHEBI:23378"/>
        <label>4</label>
    </ligand>
</feature>
<feature type="binding site" evidence="3">
    <location>
        <position position="583"/>
    </location>
    <ligand>
        <name>Cu cation</name>
        <dbReference type="ChEBI" id="CHEBI:23378"/>
        <label>2</label>
    </ligand>
</feature>
<feature type="binding site" evidence="3">
    <location>
        <position position="587"/>
    </location>
    <ligand>
        <name>Cu cation</name>
        <dbReference type="ChEBI" id="CHEBI:23378"/>
        <label>4</label>
    </ligand>
</feature>
<feature type="glycosylation site" description="N-linked (GlcNAc...) asparagine" evidence="5">
    <location>
        <position position="75"/>
    </location>
</feature>
<feature type="glycosylation site" description="N-linked (GlcNAc...) asparagine" evidence="5">
    <location>
        <position position="257"/>
    </location>
</feature>
<feature type="glycosylation site" description="N-linked (GlcNAc...) asparagine" evidence="5">
    <location>
        <position position="280"/>
    </location>
</feature>
<feature type="glycosylation site" description="N-linked (GlcNAc...) asparagine" evidence="5">
    <location>
        <position position="445"/>
    </location>
</feature>
<feature type="glycosylation site" description="N-linked (GlcNAc...) asparagine" evidence="5">
    <location>
        <position position="469"/>
    </location>
</feature>
<feature type="glycosylation site" description="N-linked (GlcNAc...) asparagine" evidence="5">
    <location>
        <position position="485"/>
    </location>
</feature>
<feature type="glycosylation site" description="N-linked (GlcNAc...) asparagine" evidence="5">
    <location>
        <position position="527"/>
    </location>
</feature>
<proteinExistence type="inferred from homology"/>
<reference key="1">
    <citation type="journal article" date="2014" name="Proc. Natl. Acad. Sci. U.S.A.">
        <title>Trajectory and genomic determinants of fungal-pathogen speciation and host adaptation.</title>
        <authorList>
            <person name="Hu X."/>
            <person name="Xiao G."/>
            <person name="Zheng P."/>
            <person name="Shang Y."/>
            <person name="Su Y."/>
            <person name="Zhang X."/>
            <person name="Liu X."/>
            <person name="Zhan S."/>
            <person name="St Leger R.J."/>
            <person name="Wang C."/>
        </authorList>
    </citation>
    <scope>NUCLEOTIDE SEQUENCE [LARGE SCALE GENOMIC DNA]</scope>
    <source>
        <strain>ARSEF 297</strain>
    </source>
</reference>
<reference key="2">
    <citation type="journal article" date="2018" name="PLoS Genet.">
        <title>Duplication of a Pks gene cluster and subsequent functional diversification facilitate environmental adaptation in Metarhizium species.</title>
        <authorList>
            <person name="Zeng G."/>
            <person name="Zhang P."/>
            <person name="Zhang Q."/>
            <person name="Zhao H."/>
            <person name="Li Z."/>
            <person name="Zhang X."/>
            <person name="Wang C."/>
            <person name="Yin W.B."/>
            <person name="Fang W."/>
        </authorList>
    </citation>
    <scope>IDENTIFICATION</scope>
    <scope>FUNCTION</scope>
    <scope>PATHWAY</scope>
</reference>
<name>MLAC1_METMF</name>
<organism>
    <name type="scientific">Metarhizium majus (strain ARSEF 297)</name>
    <dbReference type="NCBI Taxonomy" id="1276143"/>
    <lineage>
        <taxon>Eukaryota</taxon>
        <taxon>Fungi</taxon>
        <taxon>Dikarya</taxon>
        <taxon>Ascomycota</taxon>
        <taxon>Pezizomycotina</taxon>
        <taxon>Sordariomycetes</taxon>
        <taxon>Hypocreomycetidae</taxon>
        <taxon>Hypocreales</taxon>
        <taxon>Clavicipitaceae</taxon>
        <taxon>Metarhizium</taxon>
        <taxon>Metarhizium majus</taxon>
    </lineage>
</organism>
<keyword id="KW-0186">Copper</keyword>
<keyword id="KW-0325">Glycoprotein</keyword>
<keyword id="KW-0479">Metal-binding</keyword>
<keyword id="KW-0560">Oxidoreductase</keyword>
<keyword id="KW-0677">Repeat</keyword>
<keyword id="KW-0732">Signal</keyword>
<gene>
    <name evidence="1" type="primary">Mlac1</name>
    <name evidence="7" type="synonym">Abr2</name>
    <name type="ORF">MAJ_09464</name>
</gene>